<reference key="1">
    <citation type="journal article" date="2004" name="Nat. Genet.">
        <title>Comparison of genome degradation in Paratyphi A and Typhi, human-restricted serovars of Salmonella enterica that cause typhoid.</title>
        <authorList>
            <person name="McClelland M."/>
            <person name="Sanderson K.E."/>
            <person name="Clifton S.W."/>
            <person name="Latreille P."/>
            <person name="Porwollik S."/>
            <person name="Sabo A."/>
            <person name="Meyer R."/>
            <person name="Bieri T."/>
            <person name="Ozersky P."/>
            <person name="McLellan M."/>
            <person name="Harkins C.R."/>
            <person name="Wang C."/>
            <person name="Nguyen C."/>
            <person name="Berghoff A."/>
            <person name="Elliott G."/>
            <person name="Kohlberg S."/>
            <person name="Strong C."/>
            <person name="Du F."/>
            <person name="Carter J."/>
            <person name="Kremizki C."/>
            <person name="Layman D."/>
            <person name="Leonard S."/>
            <person name="Sun H."/>
            <person name="Fulton L."/>
            <person name="Nash W."/>
            <person name="Miner T."/>
            <person name="Minx P."/>
            <person name="Delehaunty K."/>
            <person name="Fronick C."/>
            <person name="Magrini V."/>
            <person name="Nhan M."/>
            <person name="Warren W."/>
            <person name="Florea L."/>
            <person name="Spieth J."/>
            <person name="Wilson R.K."/>
        </authorList>
    </citation>
    <scope>NUCLEOTIDE SEQUENCE [LARGE SCALE GENOMIC DNA]</scope>
    <source>
        <strain>ATCC 9150 / SARB42</strain>
    </source>
</reference>
<name>RSXC_SALPA</name>
<protein>
    <recommendedName>
        <fullName evidence="1">Ion-translocating oxidoreductase complex subunit C</fullName>
        <ecNumber evidence="1">7.-.-.-</ecNumber>
    </recommendedName>
    <alternativeName>
        <fullName evidence="1">Rsx electron transport complex subunit C</fullName>
    </alternativeName>
</protein>
<accession>Q5PIB9</accession>
<comment type="function">
    <text evidence="1">Part of a membrane-bound complex that couples electron transfer with translocation of ions across the membrane. Required to maintain the reduced state of SoxR.</text>
</comment>
<comment type="cofactor">
    <cofactor evidence="1">
        <name>[4Fe-4S] cluster</name>
        <dbReference type="ChEBI" id="CHEBI:49883"/>
    </cofactor>
    <text evidence="1">Binds 2 [4Fe-4S] clusters per subunit.</text>
</comment>
<comment type="subunit">
    <text evidence="1">The complex is composed of six subunits: RsxA, RsxB, RsxC, RsxD, RsxE and RsxG.</text>
</comment>
<comment type="subcellular location">
    <subcellularLocation>
        <location evidence="1">Cell inner membrane</location>
        <topology evidence="1">Peripheral membrane protein</topology>
    </subcellularLocation>
</comment>
<comment type="similarity">
    <text evidence="1">Belongs to the 4Fe4S bacterial-type ferredoxin family. RnfC subfamily.</text>
</comment>
<keyword id="KW-0004">4Fe-4S</keyword>
<keyword id="KW-0997">Cell inner membrane</keyword>
<keyword id="KW-1003">Cell membrane</keyword>
<keyword id="KW-0249">Electron transport</keyword>
<keyword id="KW-0408">Iron</keyword>
<keyword id="KW-0411">Iron-sulfur</keyword>
<keyword id="KW-0472">Membrane</keyword>
<keyword id="KW-0479">Metal-binding</keyword>
<keyword id="KW-0677">Repeat</keyword>
<keyword id="KW-1278">Translocase</keyword>
<keyword id="KW-0813">Transport</keyword>
<gene>
    <name evidence="1" type="primary">rsxC</name>
    <name type="ordered locus">SPA1396</name>
</gene>
<feature type="chain" id="PRO_1000013611" description="Ion-translocating oxidoreductase complex subunit C">
    <location>
        <begin position="1"/>
        <end position="735"/>
    </location>
</feature>
<feature type="domain" description="4Fe-4S ferredoxin-type 1" evidence="1">
    <location>
        <begin position="368"/>
        <end position="397"/>
    </location>
</feature>
<feature type="domain" description="4Fe-4S ferredoxin-type 2" evidence="1">
    <location>
        <begin position="407"/>
        <end position="436"/>
    </location>
</feature>
<feature type="region of interest" description="Disordered" evidence="2">
    <location>
        <begin position="534"/>
        <end position="711"/>
    </location>
</feature>
<feature type="binding site" evidence="1">
    <location>
        <position position="377"/>
    </location>
    <ligand>
        <name>[4Fe-4S] cluster</name>
        <dbReference type="ChEBI" id="CHEBI:49883"/>
        <label>1</label>
    </ligand>
</feature>
<feature type="binding site" evidence="1">
    <location>
        <position position="380"/>
    </location>
    <ligand>
        <name>[4Fe-4S] cluster</name>
        <dbReference type="ChEBI" id="CHEBI:49883"/>
        <label>1</label>
    </ligand>
</feature>
<feature type="binding site" evidence="1">
    <location>
        <position position="383"/>
    </location>
    <ligand>
        <name>[4Fe-4S] cluster</name>
        <dbReference type="ChEBI" id="CHEBI:49883"/>
        <label>1</label>
    </ligand>
</feature>
<feature type="binding site" evidence="1">
    <location>
        <position position="387"/>
    </location>
    <ligand>
        <name>[4Fe-4S] cluster</name>
        <dbReference type="ChEBI" id="CHEBI:49883"/>
        <label>2</label>
    </ligand>
</feature>
<feature type="binding site" evidence="1">
    <location>
        <position position="416"/>
    </location>
    <ligand>
        <name>[4Fe-4S] cluster</name>
        <dbReference type="ChEBI" id="CHEBI:49883"/>
        <label>2</label>
    </ligand>
</feature>
<feature type="binding site" evidence="1">
    <location>
        <position position="419"/>
    </location>
    <ligand>
        <name>[4Fe-4S] cluster</name>
        <dbReference type="ChEBI" id="CHEBI:49883"/>
        <label>2</label>
    </ligand>
</feature>
<feature type="binding site" evidence="1">
    <location>
        <position position="422"/>
    </location>
    <ligand>
        <name>[4Fe-4S] cluster</name>
        <dbReference type="ChEBI" id="CHEBI:49883"/>
        <label>2</label>
    </ligand>
</feature>
<feature type="binding site" evidence="1">
    <location>
        <position position="426"/>
    </location>
    <ligand>
        <name>[4Fe-4S] cluster</name>
        <dbReference type="ChEBI" id="CHEBI:49883"/>
        <label>1</label>
    </ligand>
</feature>
<organism>
    <name type="scientific">Salmonella paratyphi A (strain ATCC 9150 / SARB42)</name>
    <dbReference type="NCBI Taxonomy" id="295319"/>
    <lineage>
        <taxon>Bacteria</taxon>
        <taxon>Pseudomonadati</taxon>
        <taxon>Pseudomonadota</taxon>
        <taxon>Gammaproteobacteria</taxon>
        <taxon>Enterobacterales</taxon>
        <taxon>Enterobacteriaceae</taxon>
        <taxon>Salmonella</taxon>
    </lineage>
</organism>
<proteinExistence type="inferred from homology"/>
<sequence length="735" mass="78750">MLKLFSAFRKDKIWDFDGGIHPPEMKSQSNGTPLRQVPLAPRFVIPLKQHIGAEGELCVSVGDRVLRGQALTRGRGRMLPVHAPTSGTVIAIAPHSTAHPSALAELSVIIDADGEDRWIEREGWSDYRAHSREALIERIHQYGVAGLGGAGFPTGVKLQGGGDKITTLIINAAECEPYITADDRLMQDCAAQIVEGIRILAHILQPREVLIGIEDNKPQAISMLRAVLADAHDISLRVIPTKYPSGGAKQLTQILTGKQVPHGGRSSDIGVLMQNVGTAYAVKRAVVDGEPITERVVTLTGEAISRPGNVWARLGTPVRHLLNDAGFCPSADQMVIMGGPLMGFTLPWLDVPVVKITNCLLAPSVTEMGAPQEEKSCIRCSACADACPADLLPQQLYWFSKGQQHDKATAHHIADCIECGACAWVCPSNIPLVQYFRQEKAEINAIRLEEKRAAEAKARFEARQARLEREKAARLARHKSAAVQPAAKDQDAIAAALARVKEKQAQATQPVVIQAGSLPDNSAVIAAREARKAQARAKQAAHPMADSAISGDDPRKAAVEAAIARAKARKQEQQAGSEPAEPVDPRKAAVEAAIARAKARKQEQQAGSEPAEPVDPRKAAVEAAIARAKARKQEQQAGSEPAEPVDPRKAAVEAAIARAKARKQEQQAGSEPAEPVDPRKAAVEAAIARAKARKQEQQTVSEPVEPADPRKAAVAAAIARVQAKKAAQQQVVNED</sequence>
<dbReference type="EC" id="7.-.-.-" evidence="1"/>
<dbReference type="EMBL" id="CP000026">
    <property type="protein sequence ID" value="AAV77337.1"/>
    <property type="molecule type" value="Genomic_DNA"/>
</dbReference>
<dbReference type="RefSeq" id="WP_000915596.1">
    <property type="nucleotide sequence ID" value="NC_006511.1"/>
</dbReference>
<dbReference type="SMR" id="Q5PIB9"/>
<dbReference type="KEGG" id="spt:SPA1396"/>
<dbReference type="HOGENOM" id="CLU_010808_2_1_6"/>
<dbReference type="Proteomes" id="UP000008185">
    <property type="component" value="Chromosome"/>
</dbReference>
<dbReference type="GO" id="GO:0005886">
    <property type="term" value="C:plasma membrane"/>
    <property type="evidence" value="ECO:0007669"/>
    <property type="project" value="UniProtKB-SubCell"/>
</dbReference>
<dbReference type="GO" id="GO:0051539">
    <property type="term" value="F:4 iron, 4 sulfur cluster binding"/>
    <property type="evidence" value="ECO:0007669"/>
    <property type="project" value="UniProtKB-KW"/>
</dbReference>
<dbReference type="GO" id="GO:0009055">
    <property type="term" value="F:electron transfer activity"/>
    <property type="evidence" value="ECO:0007669"/>
    <property type="project" value="InterPro"/>
</dbReference>
<dbReference type="GO" id="GO:0046872">
    <property type="term" value="F:metal ion binding"/>
    <property type="evidence" value="ECO:0007669"/>
    <property type="project" value="UniProtKB-KW"/>
</dbReference>
<dbReference type="GO" id="GO:0022900">
    <property type="term" value="P:electron transport chain"/>
    <property type="evidence" value="ECO:0007669"/>
    <property type="project" value="UniProtKB-UniRule"/>
</dbReference>
<dbReference type="Gene3D" id="3.30.70.20">
    <property type="match status" value="1"/>
</dbReference>
<dbReference type="Gene3D" id="3.40.50.11540">
    <property type="entry name" value="NADH-ubiquinone oxidoreductase 51kDa subunit"/>
    <property type="match status" value="1"/>
</dbReference>
<dbReference type="HAMAP" id="MF_00461">
    <property type="entry name" value="RsxC_RnfC"/>
    <property type="match status" value="1"/>
</dbReference>
<dbReference type="InterPro" id="IPR017896">
    <property type="entry name" value="4Fe4S_Fe-S-bd"/>
</dbReference>
<dbReference type="InterPro" id="IPR017900">
    <property type="entry name" value="4Fe4S_Fe_S_CS"/>
</dbReference>
<dbReference type="InterPro" id="IPR010208">
    <property type="entry name" value="Ion_transpt_RnfC/RsxC"/>
</dbReference>
<dbReference type="InterPro" id="IPR011538">
    <property type="entry name" value="Nuo51_FMN-bd"/>
</dbReference>
<dbReference type="InterPro" id="IPR037225">
    <property type="entry name" value="Nuo51_FMN-bd_sf"/>
</dbReference>
<dbReference type="InterPro" id="IPR026902">
    <property type="entry name" value="RnfC_N"/>
</dbReference>
<dbReference type="InterPro" id="IPR019554">
    <property type="entry name" value="Soluble_ligand-bd"/>
</dbReference>
<dbReference type="NCBIfam" id="NF003454">
    <property type="entry name" value="PRK05035.1"/>
    <property type="match status" value="1"/>
</dbReference>
<dbReference type="NCBIfam" id="TIGR01945">
    <property type="entry name" value="rnfC"/>
    <property type="match status" value="1"/>
</dbReference>
<dbReference type="PANTHER" id="PTHR43034">
    <property type="entry name" value="ION-TRANSLOCATING OXIDOREDUCTASE COMPLEX SUBUNIT C"/>
    <property type="match status" value="1"/>
</dbReference>
<dbReference type="PANTHER" id="PTHR43034:SF2">
    <property type="entry name" value="ION-TRANSLOCATING OXIDOREDUCTASE COMPLEX SUBUNIT C"/>
    <property type="match status" value="1"/>
</dbReference>
<dbReference type="Pfam" id="PF01512">
    <property type="entry name" value="Complex1_51K"/>
    <property type="match status" value="1"/>
</dbReference>
<dbReference type="Pfam" id="PF12838">
    <property type="entry name" value="Fer4_7"/>
    <property type="match status" value="1"/>
</dbReference>
<dbReference type="Pfam" id="PF13375">
    <property type="entry name" value="RnfC_N"/>
    <property type="match status" value="1"/>
</dbReference>
<dbReference type="Pfam" id="PF10531">
    <property type="entry name" value="SLBB"/>
    <property type="match status" value="1"/>
</dbReference>
<dbReference type="SUPFAM" id="SSF46548">
    <property type="entry name" value="alpha-helical ferredoxin"/>
    <property type="match status" value="1"/>
</dbReference>
<dbReference type="SUPFAM" id="SSF142019">
    <property type="entry name" value="Nqo1 FMN-binding domain-like"/>
    <property type="match status" value="1"/>
</dbReference>
<dbReference type="PROSITE" id="PS00198">
    <property type="entry name" value="4FE4S_FER_1"/>
    <property type="match status" value="2"/>
</dbReference>
<dbReference type="PROSITE" id="PS51379">
    <property type="entry name" value="4FE4S_FER_2"/>
    <property type="match status" value="2"/>
</dbReference>
<evidence type="ECO:0000255" key="1">
    <source>
        <dbReference type="HAMAP-Rule" id="MF_00461"/>
    </source>
</evidence>
<evidence type="ECO:0000256" key="2">
    <source>
        <dbReference type="SAM" id="MobiDB-lite"/>
    </source>
</evidence>